<reference key="1">
    <citation type="journal article" date="2008" name="PLoS ONE">
        <title>Genome biology of Actinobacillus pleuropneumoniae JL03, an isolate of serotype 3 prevalent in China.</title>
        <authorList>
            <person name="Xu Z."/>
            <person name="Zhou Y."/>
            <person name="Li L."/>
            <person name="Zhou R."/>
            <person name="Xiao S."/>
            <person name="Wan Y."/>
            <person name="Zhang S."/>
            <person name="Wang K."/>
            <person name="Li W."/>
            <person name="Li L."/>
            <person name="Jin H."/>
            <person name="Kang M."/>
            <person name="Dalai B."/>
            <person name="Li T."/>
            <person name="Liu L."/>
            <person name="Cheng Y."/>
            <person name="Zhang L."/>
            <person name="Xu T."/>
            <person name="Zheng H."/>
            <person name="Pu S."/>
            <person name="Wang B."/>
            <person name="Gu W."/>
            <person name="Zhang X.L."/>
            <person name="Zhu G.-F."/>
            <person name="Wang S."/>
            <person name="Zhao G.-P."/>
            <person name="Chen H."/>
        </authorList>
    </citation>
    <scope>NUCLEOTIDE SEQUENCE [LARGE SCALE GENOMIC DNA]</scope>
    <source>
        <strain>JL03</strain>
    </source>
</reference>
<comment type="function">
    <text evidence="1">Catalyzes the conversion of 4-hydroxy-tetrahydrodipicolinate (HTPA) to tetrahydrodipicolinate.</text>
</comment>
<comment type="catalytic activity">
    <reaction evidence="1">
        <text>(S)-2,3,4,5-tetrahydrodipicolinate + NAD(+) + H2O = (2S,4S)-4-hydroxy-2,3,4,5-tetrahydrodipicolinate + NADH + H(+)</text>
        <dbReference type="Rhea" id="RHEA:35323"/>
        <dbReference type="ChEBI" id="CHEBI:15377"/>
        <dbReference type="ChEBI" id="CHEBI:15378"/>
        <dbReference type="ChEBI" id="CHEBI:16845"/>
        <dbReference type="ChEBI" id="CHEBI:57540"/>
        <dbReference type="ChEBI" id="CHEBI:57945"/>
        <dbReference type="ChEBI" id="CHEBI:67139"/>
        <dbReference type="EC" id="1.17.1.8"/>
    </reaction>
</comment>
<comment type="catalytic activity">
    <reaction evidence="1">
        <text>(S)-2,3,4,5-tetrahydrodipicolinate + NADP(+) + H2O = (2S,4S)-4-hydroxy-2,3,4,5-tetrahydrodipicolinate + NADPH + H(+)</text>
        <dbReference type="Rhea" id="RHEA:35331"/>
        <dbReference type="ChEBI" id="CHEBI:15377"/>
        <dbReference type="ChEBI" id="CHEBI:15378"/>
        <dbReference type="ChEBI" id="CHEBI:16845"/>
        <dbReference type="ChEBI" id="CHEBI:57783"/>
        <dbReference type="ChEBI" id="CHEBI:58349"/>
        <dbReference type="ChEBI" id="CHEBI:67139"/>
        <dbReference type="EC" id="1.17.1.8"/>
    </reaction>
</comment>
<comment type="pathway">
    <text evidence="1">Amino-acid biosynthesis; L-lysine biosynthesis via DAP pathway; (S)-tetrahydrodipicolinate from L-aspartate: step 4/4.</text>
</comment>
<comment type="subcellular location">
    <subcellularLocation>
        <location evidence="1">Cytoplasm</location>
    </subcellularLocation>
</comment>
<comment type="similarity">
    <text evidence="1">Belongs to the DapB family.</text>
</comment>
<comment type="caution">
    <text evidence="2">Was originally thought to be a dihydrodipicolinate reductase (DHDPR), catalyzing the conversion of dihydrodipicolinate to tetrahydrodipicolinate. However, it was shown in E.coli that the substrate of the enzymatic reaction is not dihydrodipicolinate (DHDP) but in fact (2S,4S)-4-hydroxy-2,3,4,5-tetrahydrodipicolinic acid (HTPA), the product released by the DapA-catalyzed reaction.</text>
</comment>
<gene>
    <name evidence="1" type="primary">dapB</name>
    <name type="ordered locus">APJL_0680</name>
</gene>
<proteinExistence type="inferred from homology"/>
<name>DAPB_ACTPJ</name>
<feature type="chain" id="PRO_1000093939" description="4-hydroxy-tetrahydrodipicolinate reductase">
    <location>
        <begin position="1"/>
        <end position="269"/>
    </location>
</feature>
<feature type="active site" description="Proton donor/acceptor" evidence="1">
    <location>
        <position position="155"/>
    </location>
</feature>
<feature type="active site" description="Proton donor" evidence="1">
    <location>
        <position position="159"/>
    </location>
</feature>
<feature type="binding site" evidence="1">
    <location>
        <begin position="9"/>
        <end position="14"/>
    </location>
    <ligand>
        <name>NAD(+)</name>
        <dbReference type="ChEBI" id="CHEBI:57540"/>
    </ligand>
</feature>
<feature type="binding site" evidence="1">
    <location>
        <position position="35"/>
    </location>
    <ligand>
        <name>NAD(+)</name>
        <dbReference type="ChEBI" id="CHEBI:57540"/>
    </ligand>
</feature>
<feature type="binding site" evidence="1">
    <location>
        <position position="36"/>
    </location>
    <ligand>
        <name>NADP(+)</name>
        <dbReference type="ChEBI" id="CHEBI:58349"/>
    </ligand>
</feature>
<feature type="binding site" evidence="1">
    <location>
        <begin position="98"/>
        <end position="100"/>
    </location>
    <ligand>
        <name>NAD(+)</name>
        <dbReference type="ChEBI" id="CHEBI:57540"/>
    </ligand>
</feature>
<feature type="binding site" evidence="1">
    <location>
        <begin position="122"/>
        <end position="125"/>
    </location>
    <ligand>
        <name>NAD(+)</name>
        <dbReference type="ChEBI" id="CHEBI:57540"/>
    </ligand>
</feature>
<feature type="binding site" evidence="1">
    <location>
        <position position="156"/>
    </location>
    <ligand>
        <name>(S)-2,3,4,5-tetrahydrodipicolinate</name>
        <dbReference type="ChEBI" id="CHEBI:16845"/>
    </ligand>
</feature>
<feature type="binding site" evidence="1">
    <location>
        <begin position="165"/>
        <end position="166"/>
    </location>
    <ligand>
        <name>(S)-2,3,4,5-tetrahydrodipicolinate</name>
        <dbReference type="ChEBI" id="CHEBI:16845"/>
    </ligand>
</feature>
<keyword id="KW-0028">Amino-acid biosynthesis</keyword>
<keyword id="KW-0963">Cytoplasm</keyword>
<keyword id="KW-0220">Diaminopimelate biosynthesis</keyword>
<keyword id="KW-0457">Lysine biosynthesis</keyword>
<keyword id="KW-0520">NAD</keyword>
<keyword id="KW-0521">NADP</keyword>
<keyword id="KW-0560">Oxidoreductase</keyword>
<sequence length="269" mass="28679">MTLKIGIVGAGGRMGRNLITAVHNAEGVELGAAFERKGSSLVGADAGEVAGIGATGVKISDDLSQNTNFDVLIDFTRPEGTLEHIKFCVANGKKMVIGTTGFDDAGKQAIQAAAEQISIVFASNYSVGVNLVFKLLEKAAKVMGDYCDIEVIEAHHRHKVDAPSGTALSMGEHIAKTLGRDLKTHGVFAREGITGERKRDEIGFATIRAGDVVGEHSVWFADEGERVEIAHKALSRMTFANGAVRAAKWLNTKQNGLFDMTDVLDLNNL</sequence>
<accession>B0BNW4</accession>
<evidence type="ECO:0000255" key="1">
    <source>
        <dbReference type="HAMAP-Rule" id="MF_00102"/>
    </source>
</evidence>
<evidence type="ECO:0000305" key="2"/>
<protein>
    <recommendedName>
        <fullName evidence="1">4-hydroxy-tetrahydrodipicolinate reductase</fullName>
        <shortName evidence="1">HTPA reductase</shortName>
        <ecNumber evidence="1">1.17.1.8</ecNumber>
    </recommendedName>
</protein>
<organism>
    <name type="scientific">Actinobacillus pleuropneumoniae serotype 3 (strain JL03)</name>
    <dbReference type="NCBI Taxonomy" id="434271"/>
    <lineage>
        <taxon>Bacteria</taxon>
        <taxon>Pseudomonadati</taxon>
        <taxon>Pseudomonadota</taxon>
        <taxon>Gammaproteobacteria</taxon>
        <taxon>Pasteurellales</taxon>
        <taxon>Pasteurellaceae</taxon>
        <taxon>Actinobacillus</taxon>
    </lineage>
</organism>
<dbReference type="EC" id="1.17.1.8" evidence="1"/>
<dbReference type="EMBL" id="CP000687">
    <property type="protein sequence ID" value="ABY69249.1"/>
    <property type="molecule type" value="Genomic_DNA"/>
</dbReference>
<dbReference type="RefSeq" id="WP_012262921.1">
    <property type="nucleotide sequence ID" value="NC_010278.1"/>
</dbReference>
<dbReference type="SMR" id="B0BNW4"/>
<dbReference type="KEGG" id="apj:APJL_0680"/>
<dbReference type="HOGENOM" id="CLU_047479_2_1_6"/>
<dbReference type="UniPathway" id="UPA00034">
    <property type="reaction ID" value="UER00018"/>
</dbReference>
<dbReference type="Proteomes" id="UP000008547">
    <property type="component" value="Chromosome"/>
</dbReference>
<dbReference type="GO" id="GO:0005829">
    <property type="term" value="C:cytosol"/>
    <property type="evidence" value="ECO:0007669"/>
    <property type="project" value="TreeGrafter"/>
</dbReference>
<dbReference type="GO" id="GO:0008839">
    <property type="term" value="F:4-hydroxy-tetrahydrodipicolinate reductase"/>
    <property type="evidence" value="ECO:0007669"/>
    <property type="project" value="UniProtKB-EC"/>
</dbReference>
<dbReference type="GO" id="GO:0051287">
    <property type="term" value="F:NAD binding"/>
    <property type="evidence" value="ECO:0007669"/>
    <property type="project" value="UniProtKB-UniRule"/>
</dbReference>
<dbReference type="GO" id="GO:0050661">
    <property type="term" value="F:NADP binding"/>
    <property type="evidence" value="ECO:0007669"/>
    <property type="project" value="UniProtKB-UniRule"/>
</dbReference>
<dbReference type="GO" id="GO:0016726">
    <property type="term" value="F:oxidoreductase activity, acting on CH or CH2 groups, NAD or NADP as acceptor"/>
    <property type="evidence" value="ECO:0007669"/>
    <property type="project" value="UniProtKB-UniRule"/>
</dbReference>
<dbReference type="GO" id="GO:0019877">
    <property type="term" value="P:diaminopimelate biosynthetic process"/>
    <property type="evidence" value="ECO:0007669"/>
    <property type="project" value="UniProtKB-UniRule"/>
</dbReference>
<dbReference type="GO" id="GO:0009089">
    <property type="term" value="P:lysine biosynthetic process via diaminopimelate"/>
    <property type="evidence" value="ECO:0007669"/>
    <property type="project" value="UniProtKB-UniRule"/>
</dbReference>
<dbReference type="CDD" id="cd02274">
    <property type="entry name" value="DHDPR_N"/>
    <property type="match status" value="1"/>
</dbReference>
<dbReference type="FunFam" id="3.30.360.10:FF:000004">
    <property type="entry name" value="4-hydroxy-tetrahydrodipicolinate reductase"/>
    <property type="match status" value="1"/>
</dbReference>
<dbReference type="FunFam" id="3.40.50.720:FF:000048">
    <property type="entry name" value="4-hydroxy-tetrahydrodipicolinate reductase"/>
    <property type="match status" value="1"/>
</dbReference>
<dbReference type="Gene3D" id="3.30.360.10">
    <property type="entry name" value="Dihydrodipicolinate Reductase, domain 2"/>
    <property type="match status" value="1"/>
</dbReference>
<dbReference type="Gene3D" id="3.40.50.720">
    <property type="entry name" value="NAD(P)-binding Rossmann-like Domain"/>
    <property type="match status" value="1"/>
</dbReference>
<dbReference type="HAMAP" id="MF_00102">
    <property type="entry name" value="DapB"/>
    <property type="match status" value="1"/>
</dbReference>
<dbReference type="InterPro" id="IPR022663">
    <property type="entry name" value="DapB_C"/>
</dbReference>
<dbReference type="InterPro" id="IPR000846">
    <property type="entry name" value="DapB_N"/>
</dbReference>
<dbReference type="InterPro" id="IPR022664">
    <property type="entry name" value="DapB_N_CS"/>
</dbReference>
<dbReference type="InterPro" id="IPR023940">
    <property type="entry name" value="DHDPR_bac"/>
</dbReference>
<dbReference type="InterPro" id="IPR036291">
    <property type="entry name" value="NAD(P)-bd_dom_sf"/>
</dbReference>
<dbReference type="NCBIfam" id="TIGR00036">
    <property type="entry name" value="dapB"/>
    <property type="match status" value="1"/>
</dbReference>
<dbReference type="PANTHER" id="PTHR20836:SF0">
    <property type="entry name" value="4-HYDROXY-TETRAHYDRODIPICOLINATE REDUCTASE 1, CHLOROPLASTIC-RELATED"/>
    <property type="match status" value="1"/>
</dbReference>
<dbReference type="PANTHER" id="PTHR20836">
    <property type="entry name" value="DIHYDRODIPICOLINATE REDUCTASE"/>
    <property type="match status" value="1"/>
</dbReference>
<dbReference type="Pfam" id="PF05173">
    <property type="entry name" value="DapB_C"/>
    <property type="match status" value="1"/>
</dbReference>
<dbReference type="Pfam" id="PF01113">
    <property type="entry name" value="DapB_N"/>
    <property type="match status" value="1"/>
</dbReference>
<dbReference type="PIRSF" id="PIRSF000161">
    <property type="entry name" value="DHPR"/>
    <property type="match status" value="1"/>
</dbReference>
<dbReference type="SUPFAM" id="SSF55347">
    <property type="entry name" value="Glyceraldehyde-3-phosphate dehydrogenase-like, C-terminal domain"/>
    <property type="match status" value="1"/>
</dbReference>
<dbReference type="SUPFAM" id="SSF51735">
    <property type="entry name" value="NAD(P)-binding Rossmann-fold domains"/>
    <property type="match status" value="1"/>
</dbReference>
<dbReference type="PROSITE" id="PS01298">
    <property type="entry name" value="DAPB"/>
    <property type="match status" value="1"/>
</dbReference>